<keyword id="KW-0040">ANK repeat</keyword>
<keyword id="KW-1185">Reference proteome</keyword>
<keyword id="KW-0677">Repeat</keyword>
<keyword id="KW-0802">TPR repeat</keyword>
<keyword id="KW-0833">Ubl conjugation pathway</keyword>
<name>FEM1A_DROME</name>
<reference key="1">
    <citation type="journal article" date="2000" name="Science">
        <title>The genome sequence of Drosophila melanogaster.</title>
        <authorList>
            <person name="Adams M.D."/>
            <person name="Celniker S.E."/>
            <person name="Holt R.A."/>
            <person name="Evans C.A."/>
            <person name="Gocayne J.D."/>
            <person name="Amanatides P.G."/>
            <person name="Scherer S.E."/>
            <person name="Li P.W."/>
            <person name="Hoskins R.A."/>
            <person name="Galle R.F."/>
            <person name="George R.A."/>
            <person name="Lewis S.E."/>
            <person name="Richards S."/>
            <person name="Ashburner M."/>
            <person name="Henderson S.N."/>
            <person name="Sutton G.G."/>
            <person name="Wortman J.R."/>
            <person name="Yandell M.D."/>
            <person name="Zhang Q."/>
            <person name="Chen L.X."/>
            <person name="Brandon R.C."/>
            <person name="Rogers Y.-H.C."/>
            <person name="Blazej R.G."/>
            <person name="Champe M."/>
            <person name="Pfeiffer B.D."/>
            <person name="Wan K.H."/>
            <person name="Doyle C."/>
            <person name="Baxter E.G."/>
            <person name="Helt G."/>
            <person name="Nelson C.R."/>
            <person name="Miklos G.L.G."/>
            <person name="Abril J.F."/>
            <person name="Agbayani A."/>
            <person name="An H.-J."/>
            <person name="Andrews-Pfannkoch C."/>
            <person name="Baldwin D."/>
            <person name="Ballew R.M."/>
            <person name="Basu A."/>
            <person name="Baxendale J."/>
            <person name="Bayraktaroglu L."/>
            <person name="Beasley E.M."/>
            <person name="Beeson K.Y."/>
            <person name="Benos P.V."/>
            <person name="Berman B.P."/>
            <person name="Bhandari D."/>
            <person name="Bolshakov S."/>
            <person name="Borkova D."/>
            <person name="Botchan M.R."/>
            <person name="Bouck J."/>
            <person name="Brokstein P."/>
            <person name="Brottier P."/>
            <person name="Burtis K.C."/>
            <person name="Busam D.A."/>
            <person name="Butler H."/>
            <person name="Cadieu E."/>
            <person name="Center A."/>
            <person name="Chandra I."/>
            <person name="Cherry J.M."/>
            <person name="Cawley S."/>
            <person name="Dahlke C."/>
            <person name="Davenport L.B."/>
            <person name="Davies P."/>
            <person name="de Pablos B."/>
            <person name="Delcher A."/>
            <person name="Deng Z."/>
            <person name="Mays A.D."/>
            <person name="Dew I."/>
            <person name="Dietz S.M."/>
            <person name="Dodson K."/>
            <person name="Doup L.E."/>
            <person name="Downes M."/>
            <person name="Dugan-Rocha S."/>
            <person name="Dunkov B.C."/>
            <person name="Dunn P."/>
            <person name="Durbin K.J."/>
            <person name="Evangelista C.C."/>
            <person name="Ferraz C."/>
            <person name="Ferriera S."/>
            <person name="Fleischmann W."/>
            <person name="Fosler C."/>
            <person name="Gabrielian A.E."/>
            <person name="Garg N.S."/>
            <person name="Gelbart W.M."/>
            <person name="Glasser K."/>
            <person name="Glodek A."/>
            <person name="Gong F."/>
            <person name="Gorrell J.H."/>
            <person name="Gu Z."/>
            <person name="Guan P."/>
            <person name="Harris M."/>
            <person name="Harris N.L."/>
            <person name="Harvey D.A."/>
            <person name="Heiman T.J."/>
            <person name="Hernandez J.R."/>
            <person name="Houck J."/>
            <person name="Hostin D."/>
            <person name="Houston K.A."/>
            <person name="Howland T.J."/>
            <person name="Wei M.-H."/>
            <person name="Ibegwam C."/>
            <person name="Jalali M."/>
            <person name="Kalush F."/>
            <person name="Karpen G.H."/>
            <person name="Ke Z."/>
            <person name="Kennison J.A."/>
            <person name="Ketchum K.A."/>
            <person name="Kimmel B.E."/>
            <person name="Kodira C.D."/>
            <person name="Kraft C.L."/>
            <person name="Kravitz S."/>
            <person name="Kulp D."/>
            <person name="Lai Z."/>
            <person name="Lasko P."/>
            <person name="Lei Y."/>
            <person name="Levitsky A.A."/>
            <person name="Li J.H."/>
            <person name="Li Z."/>
            <person name="Liang Y."/>
            <person name="Lin X."/>
            <person name="Liu X."/>
            <person name="Mattei B."/>
            <person name="McIntosh T.C."/>
            <person name="McLeod M.P."/>
            <person name="McPherson D."/>
            <person name="Merkulov G."/>
            <person name="Milshina N.V."/>
            <person name="Mobarry C."/>
            <person name="Morris J."/>
            <person name="Moshrefi A."/>
            <person name="Mount S.M."/>
            <person name="Moy M."/>
            <person name="Murphy B."/>
            <person name="Murphy L."/>
            <person name="Muzny D.M."/>
            <person name="Nelson D.L."/>
            <person name="Nelson D.R."/>
            <person name="Nelson K.A."/>
            <person name="Nixon K."/>
            <person name="Nusskern D.R."/>
            <person name="Pacleb J.M."/>
            <person name="Palazzolo M."/>
            <person name="Pittman G.S."/>
            <person name="Pan S."/>
            <person name="Pollard J."/>
            <person name="Puri V."/>
            <person name="Reese M.G."/>
            <person name="Reinert K."/>
            <person name="Remington K."/>
            <person name="Saunders R.D.C."/>
            <person name="Scheeler F."/>
            <person name="Shen H."/>
            <person name="Shue B.C."/>
            <person name="Siden-Kiamos I."/>
            <person name="Simpson M."/>
            <person name="Skupski M.P."/>
            <person name="Smith T.J."/>
            <person name="Spier E."/>
            <person name="Spradling A.C."/>
            <person name="Stapleton M."/>
            <person name="Strong R."/>
            <person name="Sun E."/>
            <person name="Svirskas R."/>
            <person name="Tector C."/>
            <person name="Turner R."/>
            <person name="Venter E."/>
            <person name="Wang A.H."/>
            <person name="Wang X."/>
            <person name="Wang Z.-Y."/>
            <person name="Wassarman D.A."/>
            <person name="Weinstock G.M."/>
            <person name="Weissenbach J."/>
            <person name="Williams S.M."/>
            <person name="Woodage T."/>
            <person name="Worley K.C."/>
            <person name="Wu D."/>
            <person name="Yang S."/>
            <person name="Yao Q.A."/>
            <person name="Ye J."/>
            <person name="Yeh R.-F."/>
            <person name="Zaveri J.S."/>
            <person name="Zhan M."/>
            <person name="Zhang G."/>
            <person name="Zhao Q."/>
            <person name="Zheng L."/>
            <person name="Zheng X.H."/>
            <person name="Zhong F.N."/>
            <person name="Zhong W."/>
            <person name="Zhou X."/>
            <person name="Zhu S.C."/>
            <person name="Zhu X."/>
            <person name="Smith H.O."/>
            <person name="Gibbs R.A."/>
            <person name="Myers E.W."/>
            <person name="Rubin G.M."/>
            <person name="Venter J.C."/>
        </authorList>
    </citation>
    <scope>NUCLEOTIDE SEQUENCE [LARGE SCALE GENOMIC DNA]</scope>
    <source>
        <strain>Berkeley</strain>
    </source>
</reference>
<reference key="2">
    <citation type="journal article" date="2002" name="Genome Biol.">
        <title>Annotation of the Drosophila melanogaster euchromatic genome: a systematic review.</title>
        <authorList>
            <person name="Misra S."/>
            <person name="Crosby M.A."/>
            <person name="Mungall C.J."/>
            <person name="Matthews B.B."/>
            <person name="Campbell K.S."/>
            <person name="Hradecky P."/>
            <person name="Huang Y."/>
            <person name="Kaminker J.S."/>
            <person name="Millburn G.H."/>
            <person name="Prochnik S.E."/>
            <person name="Smith C.D."/>
            <person name="Tupy J.L."/>
            <person name="Whitfield E.J."/>
            <person name="Bayraktaroglu L."/>
            <person name="Berman B.P."/>
            <person name="Bettencourt B.R."/>
            <person name="Celniker S.E."/>
            <person name="de Grey A.D.N.J."/>
            <person name="Drysdale R.A."/>
            <person name="Harris N.L."/>
            <person name="Richter J."/>
            <person name="Russo S."/>
            <person name="Schroeder A.J."/>
            <person name="Shu S.Q."/>
            <person name="Stapleton M."/>
            <person name="Yamada C."/>
            <person name="Ashburner M."/>
            <person name="Gelbart W.M."/>
            <person name="Rubin G.M."/>
            <person name="Lewis S.E."/>
        </authorList>
    </citation>
    <scope>GENOME REANNOTATION</scope>
    <source>
        <strain>Berkeley</strain>
    </source>
</reference>
<reference key="3">
    <citation type="journal article" date="2002" name="Genome Biol.">
        <title>A Drosophila full-length cDNA resource.</title>
        <authorList>
            <person name="Stapleton M."/>
            <person name="Carlson J.W."/>
            <person name="Brokstein P."/>
            <person name="Yu C."/>
            <person name="Champe M."/>
            <person name="George R.A."/>
            <person name="Guarin H."/>
            <person name="Kronmiller B."/>
            <person name="Pacleb J.M."/>
            <person name="Park S."/>
            <person name="Wan K.H."/>
            <person name="Rubin G.M."/>
            <person name="Celniker S.E."/>
        </authorList>
    </citation>
    <scope>NUCLEOTIDE SEQUENCE [LARGE SCALE MRNA]</scope>
    <source>
        <strain>Berkeley</strain>
        <tissue>Embryo</tissue>
        <tissue>Testis</tissue>
    </source>
</reference>
<dbReference type="EMBL" id="AE014297">
    <property type="protein sequence ID" value="AAF55125.2"/>
    <property type="molecule type" value="Genomic_DNA"/>
</dbReference>
<dbReference type="EMBL" id="AY084101">
    <property type="protein sequence ID" value="AAL89839.1"/>
    <property type="status" value="ALT_INIT"/>
    <property type="molecule type" value="mRNA"/>
</dbReference>
<dbReference type="EMBL" id="BT001887">
    <property type="protein sequence ID" value="AAN71661.1"/>
    <property type="molecule type" value="mRNA"/>
</dbReference>
<dbReference type="RefSeq" id="NP_001097796.1">
    <property type="nucleotide sequence ID" value="NM_001104326.2"/>
</dbReference>
<dbReference type="RefSeq" id="NP_001287333.1">
    <property type="nucleotide sequence ID" value="NM_001300404.1"/>
</dbReference>
<dbReference type="SMR" id="Q9VFD5"/>
<dbReference type="BioGRID" id="66882">
    <property type="interactions" value="1"/>
</dbReference>
<dbReference type="FunCoup" id="Q9VFD5">
    <property type="interactions" value="145"/>
</dbReference>
<dbReference type="IntAct" id="Q9VFD5">
    <property type="interactions" value="1"/>
</dbReference>
<dbReference type="STRING" id="7227.FBpp0310753"/>
<dbReference type="PaxDb" id="7227-FBpp0112148"/>
<dbReference type="DNASU" id="41816"/>
<dbReference type="EnsemblMetazoa" id="FBtr0113236">
    <property type="protein sequence ID" value="FBpp0112148"/>
    <property type="gene ID" value="FBgn0038286"/>
</dbReference>
<dbReference type="EnsemblMetazoa" id="FBtr0344380">
    <property type="protein sequence ID" value="FBpp0310753"/>
    <property type="gene ID" value="FBgn0038286"/>
</dbReference>
<dbReference type="GeneID" id="41816"/>
<dbReference type="KEGG" id="dme:Dmel_CG6966"/>
<dbReference type="UCSC" id="CG6966-RB">
    <property type="organism name" value="d. melanogaster"/>
</dbReference>
<dbReference type="AGR" id="FB:FBgn0038286"/>
<dbReference type="FlyBase" id="FBgn0038286">
    <property type="gene designation" value="CG6966"/>
</dbReference>
<dbReference type="VEuPathDB" id="VectorBase:FBgn0038286"/>
<dbReference type="eggNOG" id="KOG0508">
    <property type="taxonomic scope" value="Eukaryota"/>
</dbReference>
<dbReference type="GeneTree" id="ENSGT00940000161115"/>
<dbReference type="HOGENOM" id="CLU_020042_1_0_1"/>
<dbReference type="InParanoid" id="Q9VFD5"/>
<dbReference type="OMA" id="FMTTEWR"/>
<dbReference type="OrthoDB" id="4429489at2759"/>
<dbReference type="PhylomeDB" id="Q9VFD5"/>
<dbReference type="Reactome" id="R-DME-8951664">
    <property type="pathway name" value="Neddylation"/>
</dbReference>
<dbReference type="UniPathway" id="UPA00143"/>
<dbReference type="BioGRID-ORCS" id="41816">
    <property type="hits" value="0 hits in 3 CRISPR screens"/>
</dbReference>
<dbReference type="ChiTaRS" id="CG6966">
    <property type="organism name" value="fly"/>
</dbReference>
<dbReference type="GenomeRNAi" id="41816"/>
<dbReference type="PRO" id="PR:Q9VFD5"/>
<dbReference type="Proteomes" id="UP000000803">
    <property type="component" value="Chromosome 3R"/>
</dbReference>
<dbReference type="Bgee" id="FBgn0038286">
    <property type="expression patterns" value="Expressed in indirect flight muscle cell (Drosophila) in post-embryonic organism and 275 other cell types or tissues"/>
</dbReference>
<dbReference type="ExpressionAtlas" id="Q9VFD5">
    <property type="expression patterns" value="baseline and differential"/>
</dbReference>
<dbReference type="GO" id="GO:0000151">
    <property type="term" value="C:ubiquitin ligase complex"/>
    <property type="evidence" value="ECO:0000318"/>
    <property type="project" value="GO_Central"/>
</dbReference>
<dbReference type="GO" id="GO:1990756">
    <property type="term" value="F:ubiquitin-like ligase-substrate adaptor activity"/>
    <property type="evidence" value="ECO:0000318"/>
    <property type="project" value="GO_Central"/>
</dbReference>
<dbReference type="GO" id="GO:0043161">
    <property type="term" value="P:proteasome-mediated ubiquitin-dependent protein catabolic process"/>
    <property type="evidence" value="ECO:0000318"/>
    <property type="project" value="GO_Central"/>
</dbReference>
<dbReference type="GO" id="GO:0016567">
    <property type="term" value="P:protein ubiquitination"/>
    <property type="evidence" value="ECO:0007669"/>
    <property type="project" value="UniProtKB-UniPathway"/>
</dbReference>
<dbReference type="GO" id="GO:0051438">
    <property type="term" value="P:regulation of ubiquitin-protein transferase activity"/>
    <property type="evidence" value="ECO:0000250"/>
    <property type="project" value="UniProtKB"/>
</dbReference>
<dbReference type="FunFam" id="1.25.40.10:FF:000104">
    <property type="entry name" value="Fem-1 homolog c (C.elegans)"/>
    <property type="match status" value="1"/>
</dbReference>
<dbReference type="FunFam" id="1.25.40.20:FF:000163">
    <property type="entry name" value="Fem-1 homolog c (C.elegans)"/>
    <property type="match status" value="1"/>
</dbReference>
<dbReference type="FunFam" id="1.25.40.20:FF:000556">
    <property type="entry name" value="Protein fem-1 homolog CG6966"/>
    <property type="match status" value="1"/>
</dbReference>
<dbReference type="Gene3D" id="1.25.40.20">
    <property type="entry name" value="Ankyrin repeat-containing domain"/>
    <property type="match status" value="3"/>
</dbReference>
<dbReference type="Gene3D" id="1.25.40.10">
    <property type="entry name" value="Tetratricopeptide repeat domain"/>
    <property type="match status" value="1"/>
</dbReference>
<dbReference type="InterPro" id="IPR002110">
    <property type="entry name" value="Ankyrin_rpt"/>
</dbReference>
<dbReference type="InterPro" id="IPR036770">
    <property type="entry name" value="Ankyrin_rpt-contain_sf"/>
</dbReference>
<dbReference type="InterPro" id="IPR011990">
    <property type="entry name" value="TPR-like_helical_dom_sf"/>
</dbReference>
<dbReference type="PANTHER" id="PTHR24173">
    <property type="entry name" value="ANKYRIN REPEAT CONTAINING"/>
    <property type="match status" value="1"/>
</dbReference>
<dbReference type="PANTHER" id="PTHR24173:SF83">
    <property type="entry name" value="SOCS BOX DOMAIN-CONTAINING PROTEIN"/>
    <property type="match status" value="1"/>
</dbReference>
<dbReference type="Pfam" id="PF00023">
    <property type="entry name" value="Ank"/>
    <property type="match status" value="3"/>
</dbReference>
<dbReference type="Pfam" id="PF12796">
    <property type="entry name" value="Ank_2"/>
    <property type="match status" value="1"/>
</dbReference>
<dbReference type="PRINTS" id="PR01415">
    <property type="entry name" value="ANKYRIN"/>
</dbReference>
<dbReference type="SMART" id="SM00248">
    <property type="entry name" value="ANK"/>
    <property type="match status" value="8"/>
</dbReference>
<dbReference type="SUPFAM" id="SSF48403">
    <property type="entry name" value="Ankyrin repeat"/>
    <property type="match status" value="2"/>
</dbReference>
<dbReference type="PROSITE" id="PS50297">
    <property type="entry name" value="ANK_REP_REGION"/>
    <property type="match status" value="2"/>
</dbReference>
<dbReference type="PROSITE" id="PS50088">
    <property type="entry name" value="ANK_REPEAT"/>
    <property type="match status" value="6"/>
</dbReference>
<sequence>MDYKFIVFNAARDNNLAQLKATLYNKSSVEVGSLISAKVNGATPLVISCRNGHYDIVEYLLTKCRANVEQVGSVSFDGEPIEDAPPLWCAAAAGHLGIVKMLVRRGANVNSTTRTNSTPLRAACFDGHYEIVKYLVHHGADFEVANRHGHTCLMIACYKGHFRIAQYLLSLNADVNRCSVKGNTALHDCAESGSLQILQLLLKHGATMDVDYYGMTPLLAASVTGHMPIVEHLITLPCVSRESRIHALELLGATYVDRKRDMAAALNLWRRALEERAVEPPLEKKVQEPVPAYEMVREVTSVEELEEMVLDPDEMRMQALVIRQRILGPTHPDTSYYIRFRGAHYADAGRFDRCIELWSYALTMQQKILQPLSPMTQSSLLSFAELFSFMLVEAGRLLPRGRVVPPIEPDSMLTIFYKAVKEVERGLAFTLEQQKDQQHPQKQLPAADKSPSCSASSSASSSSSTTLLSAHQHDCNHDPNALSRTMISAIHIGCLLSSLLDTDALSPEMRRQVMGALYRLNRLKVRVRFDRTALHYACYREGTLAGRYPSCQFPSVTLAKALLEVGADPNAIDEAGNTPLHLATMQPYVEPLSHILLEGGAHLDTKNYAGETFESLLAPTPMHKIIDPMKYTTLACLAARTIKKHDIRYEGTVPATLYEFIELH</sequence>
<gene>
    <name type="ORF">CG6966</name>
</gene>
<comment type="function">
    <text evidence="1">Substrate-recognition component of a Cul2-RING (CRL2) E3 ubiquitin-protein ligase complex of the DesCEND (destruction via C-end degrons) pathway, which recognizes a C-degron located at the extreme C terminus of target proteins, leading to their ubiquitination and degradation. The C-degron recognized by the DesCEND pathway is usually a motif of less than ten residues and can be present in full-length proteins, truncated proteins or proteolytically cleaved forms.</text>
</comment>
<comment type="pathway">
    <text evidence="1">Protein modification; protein ubiquitination.</text>
</comment>
<comment type="subunit">
    <text evidence="1">Component of a CRL2 E3 ubiquitin-protein ligase complex, also named ECS (Elongin BC-CUL2/5-SOCS-box protein) complex.</text>
</comment>
<comment type="similarity">
    <text evidence="3">Belongs to the fem-1 family.</text>
</comment>
<comment type="sequence caution" evidence="3">
    <conflict type="erroneous initiation">
        <sequence resource="EMBL-CDS" id="AAL89839"/>
    </conflict>
</comment>
<proteinExistence type="evidence at transcript level"/>
<evidence type="ECO:0000250" key="1">
    <source>
        <dbReference type="UniProtKB" id="Q9BSK4"/>
    </source>
</evidence>
<evidence type="ECO:0000256" key="2">
    <source>
        <dbReference type="SAM" id="MobiDB-lite"/>
    </source>
</evidence>
<evidence type="ECO:0000305" key="3"/>
<protein>
    <recommendedName>
        <fullName>Protein fem-1 homolog CG6966</fullName>
    </recommendedName>
</protein>
<accession>Q9VFD5</accession>
<accession>Q8IG97</accession>
<accession>Q8T4I2</accession>
<organism>
    <name type="scientific">Drosophila melanogaster</name>
    <name type="common">Fruit fly</name>
    <dbReference type="NCBI Taxonomy" id="7227"/>
    <lineage>
        <taxon>Eukaryota</taxon>
        <taxon>Metazoa</taxon>
        <taxon>Ecdysozoa</taxon>
        <taxon>Arthropoda</taxon>
        <taxon>Hexapoda</taxon>
        <taxon>Insecta</taxon>
        <taxon>Pterygota</taxon>
        <taxon>Neoptera</taxon>
        <taxon>Endopterygota</taxon>
        <taxon>Diptera</taxon>
        <taxon>Brachycera</taxon>
        <taxon>Muscomorpha</taxon>
        <taxon>Ephydroidea</taxon>
        <taxon>Drosophilidae</taxon>
        <taxon>Drosophila</taxon>
        <taxon>Sophophora</taxon>
    </lineage>
</organism>
<feature type="chain" id="PRO_0000324540" description="Protein fem-1 homolog CG6966">
    <location>
        <begin position="1"/>
        <end position="664"/>
    </location>
</feature>
<feature type="repeat" description="ANK 1">
    <location>
        <begin position="40"/>
        <end position="70"/>
    </location>
</feature>
<feature type="repeat" description="ANK 2">
    <location>
        <begin position="82"/>
        <end position="111"/>
    </location>
</feature>
<feature type="repeat" description="ANK 3">
    <location>
        <begin position="115"/>
        <end position="144"/>
    </location>
</feature>
<feature type="repeat" description="ANK 4">
    <location>
        <begin position="148"/>
        <end position="177"/>
    </location>
</feature>
<feature type="repeat" description="ANK 5">
    <location>
        <begin position="181"/>
        <end position="210"/>
    </location>
</feature>
<feature type="repeat" description="ANK 6">
    <location>
        <begin position="213"/>
        <end position="242"/>
    </location>
</feature>
<feature type="repeat" description="TPR 1">
    <location>
        <begin position="245"/>
        <end position="279"/>
    </location>
</feature>
<feature type="repeat" description="TPR 2">
    <location>
        <begin position="335"/>
        <end position="368"/>
    </location>
</feature>
<feature type="repeat" description="ANK 7">
    <location>
        <begin position="529"/>
        <end position="571"/>
    </location>
</feature>
<feature type="repeat" description="ANK 8">
    <location>
        <begin position="575"/>
        <end position="605"/>
    </location>
</feature>
<feature type="region of interest" description="Disordered" evidence="2">
    <location>
        <begin position="433"/>
        <end position="460"/>
    </location>
</feature>
<feature type="compositionally biased region" description="Low complexity" evidence="2">
    <location>
        <begin position="450"/>
        <end position="460"/>
    </location>
</feature>